<name>DCTA_DEIDV</name>
<accession>C1CYN7</accession>
<organism>
    <name type="scientific">Deinococcus deserti (strain DSM 17065 / CIP 109153 / LMG 22923 / VCD115)</name>
    <dbReference type="NCBI Taxonomy" id="546414"/>
    <lineage>
        <taxon>Bacteria</taxon>
        <taxon>Thermotogati</taxon>
        <taxon>Deinococcota</taxon>
        <taxon>Deinococci</taxon>
        <taxon>Deinococcales</taxon>
        <taxon>Deinococcaceae</taxon>
        <taxon>Deinococcus</taxon>
    </lineage>
</organism>
<protein>
    <recommendedName>
        <fullName evidence="1">C4-dicarboxylate transport protein</fullName>
    </recommendedName>
</protein>
<keyword id="KW-1003">Cell membrane</keyword>
<keyword id="KW-0472">Membrane</keyword>
<keyword id="KW-1185">Reference proteome</keyword>
<keyword id="KW-0769">Symport</keyword>
<keyword id="KW-0812">Transmembrane</keyword>
<keyword id="KW-1133">Transmembrane helix</keyword>
<keyword id="KW-0813">Transport</keyword>
<proteinExistence type="inferred from homology"/>
<comment type="function">
    <text evidence="1">Responsible for the transport of dicarboxylates such as succinate, fumarate, and malate across the membrane.</text>
</comment>
<comment type="subcellular location">
    <subcellularLocation>
        <location evidence="1">Cell membrane</location>
        <topology evidence="1">Multi-pass membrane protein</topology>
    </subcellularLocation>
</comment>
<comment type="similarity">
    <text evidence="1">Belongs to the dicarboxylate/amino acid:cation symporter (DAACS) (TC 2.A.23) family.</text>
</comment>
<gene>
    <name evidence="1" type="primary">dctA</name>
    <name type="ordered locus">Deide_20510</name>
</gene>
<evidence type="ECO:0000255" key="1">
    <source>
        <dbReference type="HAMAP-Rule" id="MF_01300"/>
    </source>
</evidence>
<evidence type="ECO:0000256" key="2">
    <source>
        <dbReference type="SAM" id="MobiDB-lite"/>
    </source>
</evidence>
<sequence length="442" mass="46622">MPKIFRSLYVQVLIAIALGILTGFLFPSLGESLKPLGDGFIKLIKMIIAPIIFATVVSGIAHMRDTKKVGRVGGKALLYFELVTTFALVIGLVIVNILGPGRGMNIDPASLDTSGISKYTDAAGEQTVADFILHIIPDTLISAFTQGDLLQVLLVAVLFGFALLRLGKVGDTILKGIDTVNQVIFVILGFVMRLAPIGAFGAMAFTIGKYGVGSLAQLGYLMITFYATCALFIFGVLGLIARMSGFSILKLIRYIKEELLLVLGTSSSESALPRLMVKLEHAGAEKSVVGLVVPSGYSFNLDGTSIYLTMAAMFIAQATNTELSLGQQLGLLGVLLLTSKGAAGVTGSGFITLAATLSAVGDVPVAGLALILGIDRFMSEARALTNFIGNAVAALVIAKSERAVDVDRLTRALNGEDLPTIEPDVHSEERGEGRELDSLRPA</sequence>
<reference key="1">
    <citation type="journal article" date="2009" name="PLoS Genet.">
        <title>Alliance of proteomics and genomics to unravel the specificities of Sahara bacterium Deinococcus deserti.</title>
        <authorList>
            <person name="de Groot A."/>
            <person name="Dulermo R."/>
            <person name="Ortet P."/>
            <person name="Blanchard L."/>
            <person name="Guerin P."/>
            <person name="Fernandez B."/>
            <person name="Vacherie B."/>
            <person name="Dossat C."/>
            <person name="Jolivet E."/>
            <person name="Siguier P."/>
            <person name="Chandler M."/>
            <person name="Barakat M."/>
            <person name="Dedieu A."/>
            <person name="Barbe V."/>
            <person name="Heulin T."/>
            <person name="Sommer S."/>
            <person name="Achouak W."/>
            <person name="Armengaud J."/>
        </authorList>
    </citation>
    <scope>NUCLEOTIDE SEQUENCE [LARGE SCALE GENOMIC DNA]</scope>
    <source>
        <strain>DSM 17065 / CIP 109153 / LMG 22923 / VCD115</strain>
    </source>
</reference>
<dbReference type="EMBL" id="CP001114">
    <property type="protein sequence ID" value="ACO47067.1"/>
    <property type="molecule type" value="Genomic_DNA"/>
</dbReference>
<dbReference type="RefSeq" id="WP_012694188.1">
    <property type="nucleotide sequence ID" value="NC_012526.1"/>
</dbReference>
<dbReference type="SMR" id="C1CYN7"/>
<dbReference type="STRING" id="546414.Deide_20510"/>
<dbReference type="PaxDb" id="546414-Deide_20510"/>
<dbReference type="KEGG" id="ddr:Deide_20510"/>
<dbReference type="eggNOG" id="COG1301">
    <property type="taxonomic scope" value="Bacteria"/>
</dbReference>
<dbReference type="HOGENOM" id="CLU_019375_7_0_0"/>
<dbReference type="OrthoDB" id="7778689at2"/>
<dbReference type="Proteomes" id="UP000002208">
    <property type="component" value="Chromosome"/>
</dbReference>
<dbReference type="GO" id="GO:0005886">
    <property type="term" value="C:plasma membrane"/>
    <property type="evidence" value="ECO:0007669"/>
    <property type="project" value="UniProtKB-SubCell"/>
</dbReference>
<dbReference type="GO" id="GO:0015138">
    <property type="term" value="F:fumarate transmembrane transporter activity"/>
    <property type="evidence" value="ECO:0007669"/>
    <property type="project" value="TreeGrafter"/>
</dbReference>
<dbReference type="GO" id="GO:0015366">
    <property type="term" value="F:malate:proton symporter activity"/>
    <property type="evidence" value="ECO:0007669"/>
    <property type="project" value="TreeGrafter"/>
</dbReference>
<dbReference type="GO" id="GO:0015141">
    <property type="term" value="F:succinate transmembrane transporter activity"/>
    <property type="evidence" value="ECO:0007669"/>
    <property type="project" value="TreeGrafter"/>
</dbReference>
<dbReference type="GO" id="GO:0070778">
    <property type="term" value="P:L-aspartate transmembrane transport"/>
    <property type="evidence" value="ECO:0007669"/>
    <property type="project" value="TreeGrafter"/>
</dbReference>
<dbReference type="FunFam" id="1.10.3860.10:FF:000001">
    <property type="entry name" value="C4-dicarboxylate transport protein"/>
    <property type="match status" value="1"/>
</dbReference>
<dbReference type="Gene3D" id="1.10.3860.10">
    <property type="entry name" value="Sodium:dicarboxylate symporter"/>
    <property type="match status" value="1"/>
</dbReference>
<dbReference type="HAMAP" id="MF_01300">
    <property type="entry name" value="C4_dicarb_transport"/>
    <property type="match status" value="1"/>
</dbReference>
<dbReference type="InterPro" id="IPR023954">
    <property type="entry name" value="C4_dicarb_transport"/>
</dbReference>
<dbReference type="InterPro" id="IPR001991">
    <property type="entry name" value="Na-dicarboxylate_symporter"/>
</dbReference>
<dbReference type="InterPro" id="IPR018107">
    <property type="entry name" value="Na-dicarboxylate_symporter_CS"/>
</dbReference>
<dbReference type="InterPro" id="IPR036458">
    <property type="entry name" value="Na:dicarbo_symporter_sf"/>
</dbReference>
<dbReference type="NCBIfam" id="NF002461">
    <property type="entry name" value="PRK01663.1"/>
    <property type="match status" value="1"/>
</dbReference>
<dbReference type="NCBIfam" id="NF009587">
    <property type="entry name" value="PRK13027.1"/>
    <property type="match status" value="1"/>
</dbReference>
<dbReference type="PANTHER" id="PTHR42865:SF1">
    <property type="entry name" value="AEROBIC C4-DICARBOXYLATE TRANSPORT PROTEIN"/>
    <property type="match status" value="1"/>
</dbReference>
<dbReference type="PANTHER" id="PTHR42865">
    <property type="entry name" value="PROTON/GLUTAMATE-ASPARTATE SYMPORTER"/>
    <property type="match status" value="1"/>
</dbReference>
<dbReference type="Pfam" id="PF00375">
    <property type="entry name" value="SDF"/>
    <property type="match status" value="1"/>
</dbReference>
<dbReference type="PRINTS" id="PR00173">
    <property type="entry name" value="EDTRNSPORT"/>
</dbReference>
<dbReference type="SUPFAM" id="SSF118215">
    <property type="entry name" value="Proton glutamate symport protein"/>
    <property type="match status" value="1"/>
</dbReference>
<dbReference type="PROSITE" id="PS00713">
    <property type="entry name" value="NA_DICARBOXYL_SYMP_1"/>
    <property type="match status" value="1"/>
</dbReference>
<dbReference type="PROSITE" id="PS00714">
    <property type="entry name" value="NA_DICARBOXYL_SYMP_2"/>
    <property type="match status" value="1"/>
</dbReference>
<feature type="chain" id="PRO_1000214239" description="C4-dicarboxylate transport protein">
    <location>
        <begin position="1"/>
        <end position="442"/>
    </location>
</feature>
<feature type="transmembrane region" description="Helical" evidence="1">
    <location>
        <begin position="10"/>
        <end position="30"/>
    </location>
</feature>
<feature type="transmembrane region" description="Helical" evidence="1">
    <location>
        <begin position="40"/>
        <end position="60"/>
    </location>
</feature>
<feature type="transmembrane region" description="Helical" evidence="1">
    <location>
        <begin position="77"/>
        <end position="97"/>
    </location>
</feature>
<feature type="transmembrane region" description="Helical" evidence="1">
    <location>
        <begin position="144"/>
        <end position="164"/>
    </location>
</feature>
<feature type="transmembrane region" description="Helical" evidence="1">
    <location>
        <begin position="183"/>
        <end position="203"/>
    </location>
</feature>
<feature type="transmembrane region" description="Helical" evidence="1">
    <location>
        <begin position="221"/>
        <end position="241"/>
    </location>
</feature>
<feature type="transmembrane region" description="Helical" evidence="1">
    <location>
        <begin position="331"/>
        <end position="351"/>
    </location>
</feature>
<feature type="transmembrane region" description="Helical" evidence="1">
    <location>
        <begin position="354"/>
        <end position="374"/>
    </location>
</feature>
<feature type="region of interest" description="Disordered" evidence="2">
    <location>
        <begin position="418"/>
        <end position="442"/>
    </location>
</feature>
<feature type="compositionally biased region" description="Basic and acidic residues" evidence="2">
    <location>
        <begin position="423"/>
        <end position="442"/>
    </location>
</feature>